<comment type="function">
    <text evidence="1 2 7">Insecticidal presynaptic neurotoxin that induces massive neurotransmitter release at insect (but not vertebrate) neuromuscular junctions. Native toxin forms cation-permeable pores (with high permeability to calcium) in lipid membranes locust muscle membrane and artificial lipid bilayers (By similarity). May bind to insect neurexin-1 homolog, insect adhesion G protein-coupled receptor L1 homolog, and insect receptor-type tyrosine-protein phosphatase S homolog, and induces neurotransmitter exocytosis both by forming tetrameric pores in membranes and signaling via G protein-coupled receptor (By similarity). Oligomerization is a process independent of divalent cations (By similarity). The toxin forms channels with 0.55-0.58 nm entrance diameter and a relatively small conductance in planar phospholipid membranes (PubMed:17764656).</text>
</comment>
<comment type="subunit">
    <text evidence="6">Homotetramer in membranes.</text>
</comment>
<comment type="subcellular location">
    <subcellularLocation>
        <location evidence="11">Secreted</location>
    </subcellularLocation>
    <subcellularLocation>
        <location evidence="11">Target cell membrane</location>
    </subcellularLocation>
    <text evidence="11">Forms a membrane channel in the prey.</text>
</comment>
<comment type="tissue specificity">
    <text evidence="12">Expressed by the venom gland.</text>
</comment>
<comment type="domain">
    <text evidence="3">The H8 helix is predicted to insert into membranes and form pores by assembling into tetramers. The helix is contained within a helical bundle domain that undergoes significant conformational changes during pore formation to allow exposure of the H8 transmembrane helix and transition of the toxin from a soluble monomer to a transmembrane tetramer.</text>
</comment>
<comment type="toxic dose">
    <text evidence="8">LD(50) is 15 ug/kg to insect (Galleria mellonella) larvae.</text>
</comment>
<comment type="similarity">
    <text evidence="10">Belongs to the cationic peptide 01 (latrotoxin) family. 02 (alpha-latroinsectotoxin) subfamily.</text>
</comment>
<reference key="1">
    <citation type="journal article" date="1993" name="Eur. J. Biochem.">
        <title>Cloning and structural analysis of (alpha)-latroinsectotoxin cDNA: abundance of ankyrin-like repeats.</title>
        <authorList>
            <person name="Kiyatkin N.N.I."/>
            <person name="Dulubova I.I.E."/>
            <person name="Grishin E.V."/>
        </authorList>
    </citation>
    <scope>NUCLEOTIDE SEQUENCE [MRNA]</scope>
    <scope>PROTEIN SEQUENCE OF 36-48; 153-164; 196-207; 335-341; 352-365; 377-386; 397-402; 441-453; 455-461; 466-472; 485-488; 523-529; 566-572; 704-707; 722-730; 782-791; 831-845; 971-990; 996-1010; 1018-1039; 1077-1090; 1123-1130; 1148-1154; 1157-1162 AND 1165-1168</scope>
    <source>
        <tissue>Venom gland</tissue>
    </source>
</reference>
<reference key="2">
    <citation type="journal article" date="1998" name="Toxicon">
        <title>Black widow spider toxins: the present and the future.</title>
        <authorList>
            <person name="Grishin E.V."/>
        </authorList>
    </citation>
    <scope>TOXIC DOSE</scope>
    <source>
        <tissue>Venom</tissue>
    </source>
</reference>
<reference key="3">
    <citation type="journal article" date="2000" name="Biochimie">
        <title>Tetramerisation of alpha-latrotoxin by divalent cations is responsible for toxin-induced non-vesicular release and contributes to the Ca(2+)-dependent vesicular exocytosis from synaptosomes.</title>
        <authorList>
            <person name="Ashton A.C."/>
            <person name="Rahman M.A."/>
            <person name="Volynski K.E."/>
            <person name="Manser C."/>
            <person name="Orlova E.V."/>
            <person name="Matsushita H."/>
            <person name="Davletov B.A."/>
            <person name="van Heel M."/>
            <person name="Grishin E.V."/>
            <person name="Ushkaryov Y.A."/>
        </authorList>
    </citation>
    <scope>SUBUNIT</scope>
</reference>
<reference key="4">
    <citation type="journal article" date="2007" name="Biochim. Biophys. Acta">
        <title>The geometry of the ionic channel lumen formed by alpha-latroinsectotoxin from black widow spider venom in the bilayer lipid membranes.</title>
        <authorList>
            <person name="Shatursky O.Y."/>
            <person name="Volkova T.M."/>
            <person name="Himmelreich N.H."/>
            <person name="Grishin E.V."/>
        </authorList>
    </citation>
    <scope>FUNCTION</scope>
</reference>
<dbReference type="EMBL" id="Z14086">
    <property type="protein sequence ID" value="CAA78464.1"/>
    <property type="molecule type" value="mRNA"/>
</dbReference>
<dbReference type="PIR" id="S30355">
    <property type="entry name" value="S30355"/>
</dbReference>
<dbReference type="SMR" id="Q02989"/>
<dbReference type="TCDB" id="1.C.63.1.2">
    <property type="family name" value="the Alpha-latrotoxin (latrotoxin) family"/>
</dbReference>
<dbReference type="ArachnoServer" id="AS000062">
    <property type="toxin name" value="alpha-Latroinsectotoxin-Lt1a"/>
</dbReference>
<dbReference type="GO" id="GO:0005576">
    <property type="term" value="C:extracellular region"/>
    <property type="evidence" value="ECO:0007669"/>
    <property type="project" value="UniProtKB-SubCell"/>
</dbReference>
<dbReference type="GO" id="GO:0044231">
    <property type="term" value="C:host cell presynaptic membrane"/>
    <property type="evidence" value="ECO:0007669"/>
    <property type="project" value="UniProtKB-KW"/>
</dbReference>
<dbReference type="GO" id="GO:0016020">
    <property type="term" value="C:membrane"/>
    <property type="evidence" value="ECO:0007669"/>
    <property type="project" value="UniProtKB-KW"/>
</dbReference>
<dbReference type="GO" id="GO:0044218">
    <property type="term" value="C:other organism cell membrane"/>
    <property type="evidence" value="ECO:0007669"/>
    <property type="project" value="UniProtKB-KW"/>
</dbReference>
<dbReference type="GO" id="GO:0090729">
    <property type="term" value="F:toxin activity"/>
    <property type="evidence" value="ECO:0007669"/>
    <property type="project" value="UniProtKB-KW"/>
</dbReference>
<dbReference type="GO" id="GO:0006887">
    <property type="term" value="P:exocytosis"/>
    <property type="evidence" value="ECO:0007669"/>
    <property type="project" value="UniProtKB-KW"/>
</dbReference>
<dbReference type="Gene3D" id="1.25.40.20">
    <property type="entry name" value="Ankyrin repeat-containing domain"/>
    <property type="match status" value="4"/>
</dbReference>
<dbReference type="InterPro" id="IPR002110">
    <property type="entry name" value="Ankyrin_rpt"/>
</dbReference>
<dbReference type="InterPro" id="IPR036770">
    <property type="entry name" value="Ankyrin_rpt-contain_sf"/>
</dbReference>
<dbReference type="PANTHER" id="PTHR24126:SF14">
    <property type="entry name" value="ANK_REP_REGION DOMAIN-CONTAINING PROTEIN"/>
    <property type="match status" value="1"/>
</dbReference>
<dbReference type="PANTHER" id="PTHR24126">
    <property type="entry name" value="ANKYRIN REPEAT, PH AND SEC7 DOMAIN CONTAINING PROTEIN SECG-RELATED"/>
    <property type="match status" value="1"/>
</dbReference>
<dbReference type="Pfam" id="PF00023">
    <property type="entry name" value="Ank"/>
    <property type="match status" value="4"/>
</dbReference>
<dbReference type="Pfam" id="PF12796">
    <property type="entry name" value="Ank_2"/>
    <property type="match status" value="5"/>
</dbReference>
<dbReference type="PRINTS" id="PR01415">
    <property type="entry name" value="ANKYRIN"/>
</dbReference>
<dbReference type="SMART" id="SM00248">
    <property type="entry name" value="ANK"/>
    <property type="match status" value="20"/>
</dbReference>
<dbReference type="SUPFAM" id="SSF48403">
    <property type="entry name" value="Ankyrin repeat"/>
    <property type="match status" value="2"/>
</dbReference>
<dbReference type="PROSITE" id="PS50297">
    <property type="entry name" value="ANK_REP_REGION"/>
    <property type="match status" value="1"/>
</dbReference>
<dbReference type="PROSITE" id="PS50088">
    <property type="entry name" value="ANK_REPEAT"/>
    <property type="match status" value="10"/>
</dbReference>
<keyword id="KW-0040">ANK repeat</keyword>
<keyword id="KW-0165">Cleavage on pair of basic residues</keyword>
<keyword id="KW-0903">Direct protein sequencing</keyword>
<keyword id="KW-0268">Exocytosis</keyword>
<keyword id="KW-0472">Membrane</keyword>
<keyword id="KW-0528">Neurotoxin</keyword>
<keyword id="KW-0638">Presynaptic neurotoxin</keyword>
<keyword id="KW-0677">Repeat</keyword>
<keyword id="KW-0964">Secreted</keyword>
<keyword id="KW-1052">Target cell membrane</keyword>
<keyword id="KW-1053">Target membrane</keyword>
<keyword id="KW-0800">Toxin</keyword>
<keyword id="KW-0812">Transmembrane</keyword>
<proteinExistence type="evidence at protein level"/>
<organism>
    <name type="scientific">Latrodectus tredecimguttatus</name>
    <name type="common">Mediterranean black widow spider</name>
    <name type="synonym">Latrodectus mactans tredecimguttatus</name>
    <dbReference type="NCBI Taxonomy" id="6925"/>
    <lineage>
        <taxon>Eukaryota</taxon>
        <taxon>Metazoa</taxon>
        <taxon>Ecdysozoa</taxon>
        <taxon>Arthropoda</taxon>
        <taxon>Chelicerata</taxon>
        <taxon>Arachnida</taxon>
        <taxon>Araneae</taxon>
        <taxon>Araneomorphae</taxon>
        <taxon>Entelegynae</taxon>
        <taxon>Araneoidea</taxon>
        <taxon>Theridiidae</taxon>
        <taxon>Latrodectus</taxon>
    </lineage>
</organism>
<accession>Q02989</accession>
<name>LITA_LATTR</name>
<evidence type="ECO:0000250" key="1">
    <source>
        <dbReference type="UniProtKB" id="P23631"/>
    </source>
</evidence>
<evidence type="ECO:0000250" key="2">
    <source>
        <dbReference type="UniProtKB" id="Q25338"/>
    </source>
</evidence>
<evidence type="ECO:0000250" key="3">
    <source>
        <dbReference type="UniProtKB" id="Q9XZC0"/>
    </source>
</evidence>
<evidence type="ECO:0000255" key="4"/>
<evidence type="ECO:0000256" key="5">
    <source>
        <dbReference type="SAM" id="MobiDB-lite"/>
    </source>
</evidence>
<evidence type="ECO:0000269" key="6">
    <source>
    </source>
</evidence>
<evidence type="ECO:0000269" key="7">
    <source>
    </source>
</evidence>
<evidence type="ECO:0000269" key="8">
    <source>
    </source>
</evidence>
<evidence type="ECO:0000303" key="9">
    <source>
    </source>
</evidence>
<evidence type="ECO:0000305" key="10"/>
<evidence type="ECO:0000305" key="11">
    <source>
    </source>
</evidence>
<evidence type="ECO:0000305" key="12">
    <source>
    </source>
</evidence>
<feature type="propeptide" id="PRO_0000001616" evidence="12">
    <location>
        <begin position="1" status="less than"/>
        <end position="35"/>
    </location>
</feature>
<feature type="chain" id="PRO_0000001617" description="Alpha-latroinsectotoxin-Lt1a" evidence="10">
    <location>
        <begin position="36"/>
        <end position="1195"/>
    </location>
</feature>
<feature type="propeptide" id="PRO_0000391355" evidence="10">
    <location>
        <begin position="1196"/>
        <end position="1411"/>
    </location>
</feature>
<feature type="repeat" description="ANK 1" evidence="4">
    <location>
        <begin position="462"/>
        <end position="495"/>
    </location>
</feature>
<feature type="repeat" description="ANK 2" evidence="4">
    <location>
        <begin position="499"/>
        <end position="528"/>
    </location>
</feature>
<feature type="repeat" description="ANK 3" evidence="4">
    <location>
        <begin position="533"/>
        <end position="562"/>
    </location>
</feature>
<feature type="repeat" description="ANK 4" evidence="4">
    <location>
        <begin position="567"/>
        <end position="597"/>
    </location>
</feature>
<feature type="repeat" description="ANK 5" evidence="4">
    <location>
        <begin position="601"/>
        <end position="630"/>
    </location>
</feature>
<feature type="repeat" description="ANK 6" evidence="4">
    <location>
        <begin position="634"/>
        <end position="663"/>
    </location>
</feature>
<feature type="repeat" description="ANK 7" evidence="4">
    <location>
        <begin position="667"/>
        <end position="697"/>
    </location>
</feature>
<feature type="repeat" description="ANK 8" evidence="4">
    <location>
        <begin position="702"/>
        <end position="732"/>
    </location>
</feature>
<feature type="repeat" description="ANK 9" evidence="4">
    <location>
        <begin position="736"/>
        <end position="765"/>
    </location>
</feature>
<feature type="repeat" description="ANK 10" evidence="4">
    <location>
        <begin position="769"/>
        <end position="798"/>
    </location>
</feature>
<feature type="repeat" description="ANK 11" evidence="4">
    <location>
        <begin position="802"/>
        <end position="831"/>
    </location>
</feature>
<feature type="repeat" description="ANK 12" evidence="4">
    <location>
        <begin position="835"/>
        <end position="864"/>
    </location>
</feature>
<feature type="repeat" description="ANK 13" evidence="4">
    <location>
        <begin position="869"/>
        <end position="898"/>
    </location>
</feature>
<feature type="repeat" description="ANK 14" evidence="4">
    <location>
        <begin position="902"/>
        <end position="931"/>
    </location>
</feature>
<feature type="repeat" description="ANK 15" evidence="4">
    <location>
        <begin position="935"/>
        <end position="965"/>
    </location>
</feature>
<feature type="repeat" description="ANK 16" evidence="4">
    <location>
        <begin position="968"/>
        <end position="999"/>
    </location>
</feature>
<feature type="repeat" description="ANK 17" evidence="4">
    <location>
        <begin position="1000"/>
        <end position="1029"/>
    </location>
</feature>
<feature type="repeat" description="ANK 18" evidence="4">
    <location>
        <begin position="1080"/>
        <end position="1109"/>
    </location>
</feature>
<feature type="repeat" description="ANK 19" evidence="4">
    <location>
        <begin position="1112"/>
        <end position="1142"/>
    </location>
</feature>
<feature type="repeat" description="ANK 20" evidence="4">
    <location>
        <begin position="1146"/>
        <end position="1175"/>
    </location>
</feature>
<feature type="repeat" description="ANK 21" evidence="4">
    <location>
        <begin position="1331"/>
        <end position="1361"/>
    </location>
</feature>
<feature type="region of interest" description="Helix H8 is the probable transmembrane region of the tetrameric pore inserted in the target cell membrane" evidence="3">
    <location>
        <begin position="245"/>
        <end position="264"/>
    </location>
</feature>
<feature type="region of interest" description="Disordered" evidence="5">
    <location>
        <begin position="1230"/>
        <end position="1254"/>
    </location>
</feature>
<feature type="compositionally biased region" description="Polar residues" evidence="5">
    <location>
        <begin position="1230"/>
        <end position="1249"/>
    </location>
</feature>
<feature type="non-terminal residue">
    <location>
        <position position="1"/>
    </location>
</feature>
<protein>
    <recommendedName>
        <fullName evidence="10">Alpha-latroinsectotoxin-Lt1a</fullName>
        <shortName evidence="10">Alpha-LIT-Lt1a</shortName>
    </recommendedName>
    <alternativeName>
        <fullName evidence="9">Alpha-latroinsectotoxin</fullName>
        <shortName evidence="9">Alpha-LIT</shortName>
    </alternativeName>
</protein>
<sequence>ACSSPEVSIFHFFVYAGSFVKNFKKMKGSSAISKREMSRADQCKLLAYTAVGYETVGNVAADIASIEGANLVAAPVAAGGHLGKGLTDAAMIAMDCSSIPFEEIKEILNKEFKEMGRKLDKNTEALEHVSKLVSKTLSTVEKIRVEMREGFKLVIETIENIATKEIVFDINKIVQYFNNERENINSRQKEEFVAKLQEPAPGNFLLYLRNSRTSESGTLYSLLFRIIDQELAIPNNAGDNNAIQALYALFYGTETFISIMFYLVKQYSYLAEYHYQKGNLEEFNTNFDHMKIVFQDFKFSLIGINQNTKPLVDEVLNVLNNVKNKSFIRNVQNKLFYDLMKQTESLLELKKEIANMELPIIDETPRLSISISFKERSDDKPVDTPLLKWDKGKEVKYAIQFEQDGKFSKISSWSKPVTVQHLACPFISVDKDRRNRLIFRQFGDQIPELVGTLRGSQVEFRDIHRDLYNAAQVPYAREALSISRTLIQNGANVSETFELGRGAIHAAASAGNYDVGELLLNKDINLLEKADKNGYTPLHIAADSNKNDFVMFLIGNNADVNVRTKSDLFTPLHLAARRDLTDVTQTLIDITEIDLNAQDKSGFTPLHLSISSTSETAAILIRNTNAVINIKSKVGLTPLHLATLQNNLSVSKLLAGKGAYLNDGDANGMTPLHYAAMTGNLEMVDFLLNQQYININAATKEKKWTPLHLAILFKKNDVAERLLSDENLNIRLETNGGINPLHLASATGNKQLVIELLAKNADVTRLTSKGFSALHLGIIGKNEEIPFFLVEKGANVNDKTNSGVTPLHFAAGLGKANIFRLLLSRGADIKAEDINSQMPIHEAVSNGHLEIVRILIEKDPSLMNVKNIRNEYPFYLAVEKRYKDIFDYFVSKDANVNEVDHNGNTLLHLFSSTGELEVVQFLMQNGANFRLKNNERKTFFDLAIENGRLNIVAFAVEKNKVNLQAAHRGKTILYHAICDSAKYDKIEIVKYFIEKLNESECNPLHEAAAYAHLDLVKYFVQERGINPAEFNEENQASPFCITIHGAPCGYSLDCDTPDRLEVVEYLSDKIPDINGKCDVQENTPITVAIFANKVSILNYLVGIGADPNQQVDGDPPLYIAARQGRFEIVRCLIEVHKVDINTRNKERFTALHAAARNDFMDVVKYLVRQGADVNAKGIDDLRPIDIAGEKAKAYLQSSRFLRSGHSFQSNEIDSFGNTIHGISMSARTNDKLTQQISSKGTRSDSNSTEGKMHSENVHVRSIDVNGALLLLDFMIRVFASKKTNFAPYGSRIKTRSAAEAQAEALIMTERFENLLSGLIGDPIPDSIDFSNVHSKIYKAIMSGRRSVISEMLCSFAEEYSKLNHESIKQLLSEFETLTTTKASEIHIEESVPYAPFEICELKVNSNVSQIK</sequence>